<comment type="function">
    <text evidence="1 2 3">Receptor required for the peroxisomal import of proteins containing a C-terminal PTS2-type peroxisomal targeting signal (PubMed:12915479, PubMed:9090381). Specifically binds to cargo proteins containing a PTS2 peroxisomal targeting signal in the cytosol (By similarity). Cargo protein-binding triggers interaction with PEX5 and formation of a ternary complex composed of PEX5 and PEX7 along with PTS2-containing cargo proteins, which is tranlocated into peroxisomes by passing through the PEX13-PEX14 docking complex (By similarity).</text>
</comment>
<comment type="subunit">
    <text evidence="1">Interacts with PEX5; interaction only takes place when PEX7 is associated with cargo proteins (By similarity). Interacts with VWA8 (By similarity).</text>
</comment>
<comment type="subcellular location">
    <subcellularLocation>
        <location evidence="3">Cytoplasm</location>
        <location evidence="3">Cytosol</location>
    </subcellularLocation>
    <subcellularLocation>
        <location evidence="1">Peroxisome matrix</location>
    </subcellularLocation>
    <text evidence="1">Translocated into the peroxisome matrix together with PTS2-containing cargo proteins and PEX5.</text>
</comment>
<comment type="disruption phenotype">
    <text evidence="2">Mice were born alive, but display a variable degree of dwarfism and hypotonia with decreased motility, hampering their feeding (PubMed:12915479). Perinatal lethality is frequent, although some mice survive beyond 18 months (PubMed:12915479). In the intermediate zone of the developing cerebral cortex, increased neuronal density is observed (PubMed:12915479). Increased neuronal density is caused by defects in neuronal migration (PubMed:12915479). Mice also show defects in ossification of distal bone elements of the limbs as well as parts of the skull and vertebrae (PubMed:12915479). Cells display normal peroxisome assembly, but show impaired peroxisomal import of proteins containing a C-terminal PTS2-type peroxisomal targeting signal (PubMed:12915479). Biochemically, cells show severe depletion of plasmalogens, impaired alpha-oxidation of phytanic acid and impaired beta-oxidation of very-long-chain fatty acids (PubMed:12915479).</text>
</comment>
<comment type="similarity">
    <text evidence="5">Belongs to the WD repeat peroxin-7 family.</text>
</comment>
<protein>
    <recommendedName>
        <fullName evidence="5">Peroxisomal targeting signal 2 receptor</fullName>
        <shortName evidence="4">PTS2 receptor</shortName>
    </recommendedName>
    <alternativeName>
        <fullName evidence="5">Peroxin-7</fullName>
    </alternativeName>
</protein>
<proteinExistence type="evidence at protein level"/>
<gene>
    <name evidence="4 6" type="primary">Pex7</name>
</gene>
<dbReference type="EMBL" id="U69171">
    <property type="protein sequence ID" value="AAB49755.1"/>
    <property type="molecule type" value="mRNA"/>
</dbReference>
<dbReference type="EMBL" id="BC132213">
    <property type="protein sequence ID" value="AAI32214.1"/>
    <property type="molecule type" value="mRNA"/>
</dbReference>
<dbReference type="EMBL" id="BC132503">
    <property type="protein sequence ID" value="AAI32504.1"/>
    <property type="molecule type" value="mRNA"/>
</dbReference>
<dbReference type="CCDS" id="CCDS23720.1"/>
<dbReference type="RefSeq" id="NP_032848.1">
    <property type="nucleotide sequence ID" value="NM_008822.2"/>
</dbReference>
<dbReference type="SMR" id="P97865"/>
<dbReference type="BioGRID" id="202118">
    <property type="interactions" value="12"/>
</dbReference>
<dbReference type="FunCoup" id="P97865">
    <property type="interactions" value="656"/>
</dbReference>
<dbReference type="STRING" id="10090.ENSMUSP00000020182"/>
<dbReference type="iPTMnet" id="P97865"/>
<dbReference type="PhosphoSitePlus" id="P97865"/>
<dbReference type="PaxDb" id="10090-ENSMUSP00000020182"/>
<dbReference type="ProteomicsDB" id="288045"/>
<dbReference type="Pumba" id="P97865"/>
<dbReference type="Antibodypedia" id="33017">
    <property type="antibodies" value="156 antibodies from 34 providers"/>
</dbReference>
<dbReference type="Ensembl" id="ENSMUST00000020182.16">
    <property type="protein sequence ID" value="ENSMUSP00000020182.9"/>
    <property type="gene ID" value="ENSMUSG00000020003.17"/>
</dbReference>
<dbReference type="GeneID" id="18634"/>
<dbReference type="KEGG" id="mmu:18634"/>
<dbReference type="UCSC" id="uc007enl.2">
    <property type="organism name" value="mouse"/>
</dbReference>
<dbReference type="AGR" id="MGI:1321392"/>
<dbReference type="CTD" id="5191"/>
<dbReference type="MGI" id="MGI:1321392">
    <property type="gene designation" value="Pex7"/>
</dbReference>
<dbReference type="VEuPathDB" id="HostDB:ENSMUSG00000020003"/>
<dbReference type="eggNOG" id="KOG0277">
    <property type="taxonomic scope" value="Eukaryota"/>
</dbReference>
<dbReference type="GeneTree" id="ENSGT00940000157264"/>
<dbReference type="InParanoid" id="P97865"/>
<dbReference type="OMA" id="FAVHWNL"/>
<dbReference type="OrthoDB" id="273771at2759"/>
<dbReference type="PhylomeDB" id="P97865"/>
<dbReference type="TreeFam" id="TF323220"/>
<dbReference type="Reactome" id="R-MMU-9033241">
    <property type="pathway name" value="Peroxisomal protein import"/>
</dbReference>
<dbReference type="BioGRID-ORCS" id="18634">
    <property type="hits" value="6 hits in 76 CRISPR screens"/>
</dbReference>
<dbReference type="PRO" id="PR:P97865"/>
<dbReference type="Proteomes" id="UP000000589">
    <property type="component" value="Chromosome 10"/>
</dbReference>
<dbReference type="RNAct" id="P97865">
    <property type="molecule type" value="protein"/>
</dbReference>
<dbReference type="Bgee" id="ENSMUSG00000020003">
    <property type="expression patterns" value="Expressed in left lobe of liver and 258 other cell types or tissues"/>
</dbReference>
<dbReference type="ExpressionAtlas" id="P97865">
    <property type="expression patterns" value="baseline and differential"/>
</dbReference>
<dbReference type="GO" id="GO:0005829">
    <property type="term" value="C:cytosol"/>
    <property type="evidence" value="ECO:0000314"/>
    <property type="project" value="MGI"/>
</dbReference>
<dbReference type="GO" id="GO:0005782">
    <property type="term" value="C:peroxisomal matrix"/>
    <property type="evidence" value="ECO:0000250"/>
    <property type="project" value="UniProtKB"/>
</dbReference>
<dbReference type="GO" id="GO:0019899">
    <property type="term" value="F:enzyme binding"/>
    <property type="evidence" value="ECO:0007669"/>
    <property type="project" value="Ensembl"/>
</dbReference>
<dbReference type="GO" id="GO:0005053">
    <property type="term" value="F:peroxisome matrix targeting signal-2 binding"/>
    <property type="evidence" value="ECO:0000250"/>
    <property type="project" value="UniProtKB"/>
</dbReference>
<dbReference type="GO" id="GO:0042803">
    <property type="term" value="F:protein homodimerization activity"/>
    <property type="evidence" value="ECO:0007669"/>
    <property type="project" value="Ensembl"/>
</dbReference>
<dbReference type="GO" id="GO:0001958">
    <property type="term" value="P:endochondral ossification"/>
    <property type="evidence" value="ECO:0000315"/>
    <property type="project" value="MGI"/>
</dbReference>
<dbReference type="GO" id="GO:0008611">
    <property type="term" value="P:ether lipid biosynthetic process"/>
    <property type="evidence" value="ECO:0007669"/>
    <property type="project" value="Ensembl"/>
</dbReference>
<dbReference type="GO" id="GO:0006635">
    <property type="term" value="P:fatty acid beta-oxidation"/>
    <property type="evidence" value="ECO:0000315"/>
    <property type="project" value="MGI"/>
</dbReference>
<dbReference type="GO" id="GO:0001764">
    <property type="term" value="P:neuron migration"/>
    <property type="evidence" value="ECO:0000315"/>
    <property type="project" value="MGI"/>
</dbReference>
<dbReference type="GO" id="GO:0016558">
    <property type="term" value="P:protein import into peroxisome matrix"/>
    <property type="evidence" value="ECO:0000315"/>
    <property type="project" value="UniProtKB"/>
</dbReference>
<dbReference type="GO" id="GO:0006625">
    <property type="term" value="P:protein targeting to peroxisome"/>
    <property type="evidence" value="ECO:0000315"/>
    <property type="project" value="MGI"/>
</dbReference>
<dbReference type="CDD" id="cd00200">
    <property type="entry name" value="WD40"/>
    <property type="match status" value="1"/>
</dbReference>
<dbReference type="FunFam" id="2.130.10.10:FF:000372">
    <property type="entry name" value="Peroxisomal biogenesis factor 7"/>
    <property type="match status" value="1"/>
</dbReference>
<dbReference type="Gene3D" id="2.130.10.10">
    <property type="entry name" value="YVTN repeat-like/Quinoprotein amine dehydrogenase"/>
    <property type="match status" value="1"/>
</dbReference>
<dbReference type="InterPro" id="IPR020472">
    <property type="entry name" value="G-protein_beta_WD-40_rep"/>
</dbReference>
<dbReference type="InterPro" id="IPR044536">
    <property type="entry name" value="PEX7"/>
</dbReference>
<dbReference type="InterPro" id="IPR015943">
    <property type="entry name" value="WD40/YVTN_repeat-like_dom_sf"/>
</dbReference>
<dbReference type="InterPro" id="IPR019775">
    <property type="entry name" value="WD40_repeat_CS"/>
</dbReference>
<dbReference type="InterPro" id="IPR036322">
    <property type="entry name" value="WD40_repeat_dom_sf"/>
</dbReference>
<dbReference type="InterPro" id="IPR001680">
    <property type="entry name" value="WD40_rpt"/>
</dbReference>
<dbReference type="PANTHER" id="PTHR46027">
    <property type="entry name" value="PEROXISOMAL TARGETING SIGNAL 2 RECEPTOR"/>
    <property type="match status" value="1"/>
</dbReference>
<dbReference type="PANTHER" id="PTHR46027:SF1">
    <property type="entry name" value="PEROXISOMAL TARGETING SIGNAL 2 RECEPTOR"/>
    <property type="match status" value="1"/>
</dbReference>
<dbReference type="Pfam" id="PF00400">
    <property type="entry name" value="WD40"/>
    <property type="match status" value="5"/>
</dbReference>
<dbReference type="PRINTS" id="PR00320">
    <property type="entry name" value="GPROTEINBRPT"/>
</dbReference>
<dbReference type="SMART" id="SM00320">
    <property type="entry name" value="WD40"/>
    <property type="match status" value="6"/>
</dbReference>
<dbReference type="SUPFAM" id="SSF50978">
    <property type="entry name" value="WD40 repeat-like"/>
    <property type="match status" value="1"/>
</dbReference>
<dbReference type="PROSITE" id="PS00678">
    <property type="entry name" value="WD_REPEATS_1"/>
    <property type="match status" value="3"/>
</dbReference>
<dbReference type="PROSITE" id="PS50082">
    <property type="entry name" value="WD_REPEATS_2"/>
    <property type="match status" value="4"/>
</dbReference>
<dbReference type="PROSITE" id="PS50294">
    <property type="entry name" value="WD_REPEATS_REGION"/>
    <property type="match status" value="1"/>
</dbReference>
<evidence type="ECO:0000250" key="1">
    <source>
        <dbReference type="UniProtKB" id="O00628"/>
    </source>
</evidence>
<evidence type="ECO:0000269" key="2">
    <source>
    </source>
</evidence>
<evidence type="ECO:0000269" key="3">
    <source>
    </source>
</evidence>
<evidence type="ECO:0000303" key="4">
    <source>
    </source>
</evidence>
<evidence type="ECO:0000305" key="5"/>
<evidence type="ECO:0000312" key="6">
    <source>
        <dbReference type="MGI" id="MGI:1321392"/>
    </source>
</evidence>
<sequence length="318" mass="35502">MSAARTLRVPGRHGYAAEFSPYLPGRLACAAAQHYGIAGCGTLLVLDQNESGLQIFRSFDWNDGLFDVTWSENNEHVLVTCSGDGSLQLWDTAKATGPLQVYKEHTQEVYSVDWSQTRGEQLVVSGSWDQTVKVWDPTVGNSLCTFRGHESVIYSTIWSPHIPGCFASASGDQTLRIWDVKTTGVRIVIPAHQTEILSCDWCKYNENLVVTGAVDCSLRGWDLRNVRQPVFELLGHTYAIRRVKFSPFHASVLASCSYDFTVRFWNFSKPDPLLETVEHHTEFTCGLDLSLQSPTQVADCSWDETIKIYDPVCLTVPG</sequence>
<accession>P97865</accession>
<accession>A2RSR2</accession>
<keyword id="KW-0963">Cytoplasm</keyword>
<keyword id="KW-0576">Peroxisome</keyword>
<keyword id="KW-0653">Protein transport</keyword>
<keyword id="KW-1185">Reference proteome</keyword>
<keyword id="KW-0677">Repeat</keyword>
<keyword id="KW-0813">Transport</keyword>
<keyword id="KW-0853">WD repeat</keyword>
<name>PEX7_MOUSE</name>
<feature type="chain" id="PRO_0000051117" description="Peroxisomal targeting signal 2 receptor">
    <location>
        <begin position="1"/>
        <end position="318"/>
    </location>
</feature>
<feature type="repeat" description="WD 1">
    <location>
        <begin position="60"/>
        <end position="91"/>
    </location>
</feature>
<feature type="repeat" description="WD 2">
    <location>
        <begin position="104"/>
        <end position="136"/>
    </location>
</feature>
<feature type="repeat" description="WD 3">
    <location>
        <begin position="148"/>
        <end position="179"/>
    </location>
</feature>
<feature type="repeat" description="WD 4">
    <location>
        <begin position="191"/>
        <end position="222"/>
    </location>
</feature>
<feature type="repeat" description="WD 5">
    <location>
        <begin position="235"/>
        <end position="266"/>
    </location>
</feature>
<feature type="repeat" description="WD 6">
    <location>
        <begin position="279"/>
        <end position="310"/>
    </location>
</feature>
<reference key="1">
    <citation type="journal article" date="1997" name="Nat. Genet.">
        <title>Human PEX7 encodes the peroxisomal PTS2 receptor and is responsible for rhizomelic chondrodysplasia punctata.</title>
        <authorList>
            <person name="Braverman N."/>
            <person name="Steel G."/>
            <person name="Obie C."/>
            <person name="Moser A."/>
            <person name="Moser H."/>
            <person name="Gould S.J."/>
            <person name="Valle D."/>
        </authorList>
    </citation>
    <scope>NUCLEOTIDE SEQUENCE [MRNA]</scope>
    <scope>FUNCTION</scope>
    <scope>SUBCELLULAR LOCATION</scope>
</reference>
<reference key="2">
    <citation type="journal article" date="2004" name="Genome Res.">
        <title>The status, quality, and expansion of the NIH full-length cDNA project: the Mammalian Gene Collection (MGC).</title>
        <authorList>
            <consortium name="The MGC Project Team"/>
        </authorList>
    </citation>
    <scope>NUCLEOTIDE SEQUENCE [LARGE SCALE MRNA]</scope>
    <source>
        <tissue>Brain</tissue>
    </source>
</reference>
<reference key="3">
    <citation type="journal article" date="2010" name="Cell">
        <title>A tissue-specific atlas of mouse protein phosphorylation and expression.</title>
        <authorList>
            <person name="Huttlin E.L."/>
            <person name="Jedrychowski M.P."/>
            <person name="Elias J.E."/>
            <person name="Goswami T."/>
            <person name="Rad R."/>
            <person name="Beausoleil S.A."/>
            <person name="Villen J."/>
            <person name="Haas W."/>
            <person name="Sowa M.E."/>
            <person name="Gygi S.P."/>
        </authorList>
    </citation>
    <scope>IDENTIFICATION BY MASS SPECTROMETRY [LARGE SCALE ANALYSIS]</scope>
    <source>
        <tissue>Liver</tissue>
    </source>
</reference>
<reference key="4">
    <citation type="journal article" date="2003" name="Hum. Mol. Genet.">
        <title>Impaired neuronal migration and endochondral ossification in Pex7 knockout mice: a model for rhizomelic chondrodysplasia punctata.</title>
        <authorList>
            <person name="Brites P."/>
            <person name="Motley A.M."/>
            <person name="Gressens P."/>
            <person name="Mooyer P.A."/>
            <person name="Ploegaert I."/>
            <person name="Everts V."/>
            <person name="Evrard P."/>
            <person name="Carmeliet P."/>
            <person name="Dewerchin M."/>
            <person name="Schoonjans L."/>
            <person name="Duran M."/>
            <person name="Waterham H.R."/>
            <person name="Wanders R.J."/>
            <person name="Baes M."/>
        </authorList>
    </citation>
    <scope>FUNCTION</scope>
    <scope>DISRUPTION PHENOTYPE</scope>
</reference>
<organism>
    <name type="scientific">Mus musculus</name>
    <name type="common">Mouse</name>
    <dbReference type="NCBI Taxonomy" id="10090"/>
    <lineage>
        <taxon>Eukaryota</taxon>
        <taxon>Metazoa</taxon>
        <taxon>Chordata</taxon>
        <taxon>Craniata</taxon>
        <taxon>Vertebrata</taxon>
        <taxon>Euteleostomi</taxon>
        <taxon>Mammalia</taxon>
        <taxon>Eutheria</taxon>
        <taxon>Euarchontoglires</taxon>
        <taxon>Glires</taxon>
        <taxon>Rodentia</taxon>
        <taxon>Myomorpha</taxon>
        <taxon>Muroidea</taxon>
        <taxon>Muridae</taxon>
        <taxon>Murinae</taxon>
        <taxon>Mus</taxon>
        <taxon>Mus</taxon>
    </lineage>
</organism>